<organism>
    <name type="scientific">Desulforudis audaxviator (strain MP104C)</name>
    <dbReference type="NCBI Taxonomy" id="477974"/>
    <lineage>
        <taxon>Bacteria</taxon>
        <taxon>Bacillati</taxon>
        <taxon>Bacillota</taxon>
        <taxon>Clostridia</taxon>
        <taxon>Thermoanaerobacterales</taxon>
        <taxon>Candidatus Desulforudaceae</taxon>
        <taxon>Candidatus Desulforudis</taxon>
    </lineage>
</organism>
<dbReference type="EC" id="6.3.4.20" evidence="1"/>
<dbReference type="EMBL" id="CP000860">
    <property type="protein sequence ID" value="ACA59747.1"/>
    <property type="molecule type" value="Genomic_DNA"/>
</dbReference>
<dbReference type="RefSeq" id="WP_012302333.1">
    <property type="nucleotide sequence ID" value="NC_010424.1"/>
</dbReference>
<dbReference type="SMR" id="B1I3W2"/>
<dbReference type="STRING" id="477974.Daud_1236"/>
<dbReference type="KEGG" id="dau:Daud_1236"/>
<dbReference type="eggNOG" id="COG0603">
    <property type="taxonomic scope" value="Bacteria"/>
</dbReference>
<dbReference type="HOGENOM" id="CLU_081854_1_0_9"/>
<dbReference type="OrthoDB" id="9789567at2"/>
<dbReference type="UniPathway" id="UPA00391"/>
<dbReference type="Proteomes" id="UP000008544">
    <property type="component" value="Chromosome"/>
</dbReference>
<dbReference type="GO" id="GO:0005524">
    <property type="term" value="F:ATP binding"/>
    <property type="evidence" value="ECO:0007669"/>
    <property type="project" value="UniProtKB-UniRule"/>
</dbReference>
<dbReference type="GO" id="GO:0016879">
    <property type="term" value="F:ligase activity, forming carbon-nitrogen bonds"/>
    <property type="evidence" value="ECO:0007669"/>
    <property type="project" value="UniProtKB-UniRule"/>
</dbReference>
<dbReference type="GO" id="GO:0008270">
    <property type="term" value="F:zinc ion binding"/>
    <property type="evidence" value="ECO:0007669"/>
    <property type="project" value="UniProtKB-UniRule"/>
</dbReference>
<dbReference type="GO" id="GO:0008616">
    <property type="term" value="P:queuosine biosynthetic process"/>
    <property type="evidence" value="ECO:0007669"/>
    <property type="project" value="UniProtKB-UniRule"/>
</dbReference>
<dbReference type="CDD" id="cd01995">
    <property type="entry name" value="QueC-like"/>
    <property type="match status" value="1"/>
</dbReference>
<dbReference type="Gene3D" id="3.40.50.620">
    <property type="entry name" value="HUPs"/>
    <property type="match status" value="1"/>
</dbReference>
<dbReference type="HAMAP" id="MF_01633">
    <property type="entry name" value="QueC"/>
    <property type="match status" value="1"/>
</dbReference>
<dbReference type="InterPro" id="IPR018317">
    <property type="entry name" value="QueC"/>
</dbReference>
<dbReference type="InterPro" id="IPR014729">
    <property type="entry name" value="Rossmann-like_a/b/a_fold"/>
</dbReference>
<dbReference type="NCBIfam" id="TIGR00364">
    <property type="entry name" value="7-cyano-7-deazaguanine synthase QueC"/>
    <property type="match status" value="1"/>
</dbReference>
<dbReference type="PANTHER" id="PTHR42914">
    <property type="entry name" value="7-CYANO-7-DEAZAGUANINE SYNTHASE"/>
    <property type="match status" value="1"/>
</dbReference>
<dbReference type="PANTHER" id="PTHR42914:SF1">
    <property type="entry name" value="7-CYANO-7-DEAZAGUANINE SYNTHASE"/>
    <property type="match status" value="1"/>
</dbReference>
<dbReference type="Pfam" id="PF06508">
    <property type="entry name" value="QueC"/>
    <property type="match status" value="1"/>
</dbReference>
<dbReference type="PIRSF" id="PIRSF006293">
    <property type="entry name" value="ExsB"/>
    <property type="match status" value="1"/>
</dbReference>
<dbReference type="SUPFAM" id="SSF52402">
    <property type="entry name" value="Adenine nucleotide alpha hydrolases-like"/>
    <property type="match status" value="1"/>
</dbReference>
<proteinExistence type="inferred from homology"/>
<reference key="1">
    <citation type="submission" date="2007-10" db="EMBL/GenBank/DDBJ databases">
        <title>Complete sequence of chromosome of Desulforudis audaxviator MP104C.</title>
        <authorList>
            <person name="Copeland A."/>
            <person name="Lucas S."/>
            <person name="Lapidus A."/>
            <person name="Barry K."/>
            <person name="Glavina del Rio T."/>
            <person name="Dalin E."/>
            <person name="Tice H."/>
            <person name="Bruce D."/>
            <person name="Pitluck S."/>
            <person name="Lowry S.R."/>
            <person name="Larimer F."/>
            <person name="Land M.L."/>
            <person name="Hauser L."/>
            <person name="Kyrpides N."/>
            <person name="Ivanova N.N."/>
            <person name="Richardson P."/>
        </authorList>
    </citation>
    <scope>NUCLEOTIDE SEQUENCE [LARGE SCALE GENOMIC DNA]</scope>
    <source>
        <strain>MP104C</strain>
    </source>
</reference>
<sequence length="220" mass="23745">MKGIVLLSGGLDSAVCLAFGVRSLEVALCLTADYGQLAAGREIAAAAALSAHYGIRHQVVELPFLREIDCSALTGRLGLPEPEEMELDDPVRSAETARQVWVPNRNGLLVNVAACYAEALGCERIIAGFNREEAQHFPDNSPQFLDAVNHSLAYSTLSGIRVISYTQQLDKAEIVALGQRLGLPWSLVWSCYRGGDEACGVCESCRRLERAKRSAGGVRV</sequence>
<protein>
    <recommendedName>
        <fullName evidence="1">7-cyano-7-deazaguanine synthase</fullName>
        <ecNumber evidence="1">6.3.4.20</ecNumber>
    </recommendedName>
    <alternativeName>
        <fullName evidence="1">7-cyano-7-carbaguanine synthase</fullName>
    </alternativeName>
    <alternativeName>
        <fullName evidence="1">PreQ(0) synthase</fullName>
    </alternativeName>
    <alternativeName>
        <fullName evidence="1">Queuosine biosynthesis protein QueC</fullName>
    </alternativeName>
</protein>
<feature type="chain" id="PRO_1000186584" description="7-cyano-7-deazaguanine synthase">
    <location>
        <begin position="1"/>
        <end position="220"/>
    </location>
</feature>
<feature type="binding site" evidence="1">
    <location>
        <begin position="7"/>
        <end position="17"/>
    </location>
    <ligand>
        <name>ATP</name>
        <dbReference type="ChEBI" id="CHEBI:30616"/>
    </ligand>
</feature>
<feature type="binding site" evidence="1">
    <location>
        <position position="191"/>
    </location>
    <ligand>
        <name>Zn(2+)</name>
        <dbReference type="ChEBI" id="CHEBI:29105"/>
    </ligand>
</feature>
<feature type="binding site" evidence="1">
    <location>
        <position position="199"/>
    </location>
    <ligand>
        <name>Zn(2+)</name>
        <dbReference type="ChEBI" id="CHEBI:29105"/>
    </ligand>
</feature>
<feature type="binding site" evidence="1">
    <location>
        <position position="202"/>
    </location>
    <ligand>
        <name>Zn(2+)</name>
        <dbReference type="ChEBI" id="CHEBI:29105"/>
    </ligand>
</feature>
<feature type="binding site" evidence="1">
    <location>
        <position position="205"/>
    </location>
    <ligand>
        <name>Zn(2+)</name>
        <dbReference type="ChEBI" id="CHEBI:29105"/>
    </ligand>
</feature>
<accession>B1I3W2</accession>
<evidence type="ECO:0000255" key="1">
    <source>
        <dbReference type="HAMAP-Rule" id="MF_01633"/>
    </source>
</evidence>
<gene>
    <name evidence="1" type="primary">queC</name>
    <name type="ordered locus">Daud_1236</name>
</gene>
<name>QUEC_DESAP</name>
<comment type="function">
    <text evidence="1">Catalyzes the ATP-dependent conversion of 7-carboxy-7-deazaguanine (CDG) to 7-cyano-7-deazaguanine (preQ(0)).</text>
</comment>
<comment type="catalytic activity">
    <reaction evidence="1">
        <text>7-carboxy-7-deazaguanine + NH4(+) + ATP = 7-cyano-7-deazaguanine + ADP + phosphate + H2O + H(+)</text>
        <dbReference type="Rhea" id="RHEA:27982"/>
        <dbReference type="ChEBI" id="CHEBI:15377"/>
        <dbReference type="ChEBI" id="CHEBI:15378"/>
        <dbReference type="ChEBI" id="CHEBI:28938"/>
        <dbReference type="ChEBI" id="CHEBI:30616"/>
        <dbReference type="ChEBI" id="CHEBI:43474"/>
        <dbReference type="ChEBI" id="CHEBI:45075"/>
        <dbReference type="ChEBI" id="CHEBI:61036"/>
        <dbReference type="ChEBI" id="CHEBI:456216"/>
        <dbReference type="EC" id="6.3.4.20"/>
    </reaction>
</comment>
<comment type="cofactor">
    <cofactor evidence="1">
        <name>Zn(2+)</name>
        <dbReference type="ChEBI" id="CHEBI:29105"/>
    </cofactor>
    <text evidence="1">Binds 1 zinc ion per subunit.</text>
</comment>
<comment type="pathway">
    <text evidence="1">Purine metabolism; 7-cyano-7-deazaguanine biosynthesis.</text>
</comment>
<comment type="subunit">
    <text evidence="1">Homodimer.</text>
</comment>
<comment type="similarity">
    <text evidence="1">Belongs to the QueC family.</text>
</comment>
<keyword id="KW-0067">ATP-binding</keyword>
<keyword id="KW-0436">Ligase</keyword>
<keyword id="KW-0479">Metal-binding</keyword>
<keyword id="KW-0547">Nucleotide-binding</keyword>
<keyword id="KW-0671">Queuosine biosynthesis</keyword>
<keyword id="KW-1185">Reference proteome</keyword>
<keyword id="KW-0862">Zinc</keyword>